<gene>
    <name evidence="1" type="primary">metXS</name>
    <name type="ordered locus">Lcho_0321</name>
</gene>
<comment type="function">
    <text evidence="1">Transfers a succinyl group from succinyl-CoA to L-homoserine, forming succinyl-L-homoserine.</text>
</comment>
<comment type="catalytic activity">
    <reaction evidence="1">
        <text>L-homoserine + succinyl-CoA = O-succinyl-L-homoserine + CoA</text>
        <dbReference type="Rhea" id="RHEA:22008"/>
        <dbReference type="ChEBI" id="CHEBI:57287"/>
        <dbReference type="ChEBI" id="CHEBI:57292"/>
        <dbReference type="ChEBI" id="CHEBI:57476"/>
        <dbReference type="ChEBI" id="CHEBI:57661"/>
        <dbReference type="EC" id="2.3.1.46"/>
    </reaction>
</comment>
<comment type="pathway">
    <text evidence="1">Amino-acid biosynthesis; L-methionine biosynthesis via de novo pathway; O-succinyl-L-homoserine from L-homoserine: step 1/1.</text>
</comment>
<comment type="subunit">
    <text evidence="1">Homodimer.</text>
</comment>
<comment type="subcellular location">
    <subcellularLocation>
        <location evidence="1">Cytoplasm</location>
    </subcellularLocation>
</comment>
<comment type="similarity">
    <text evidence="1">Belongs to the AB hydrolase superfamily. MetX family.</text>
</comment>
<feature type="chain" id="PRO_1000115229" description="Homoserine O-succinyltransferase">
    <location>
        <begin position="1"/>
        <end position="377"/>
    </location>
</feature>
<feature type="domain" description="AB hydrolase-1" evidence="1">
    <location>
        <begin position="45"/>
        <end position="356"/>
    </location>
</feature>
<feature type="active site" description="Nucleophile" evidence="1">
    <location>
        <position position="151"/>
    </location>
</feature>
<feature type="active site" evidence="1">
    <location>
        <position position="317"/>
    </location>
</feature>
<feature type="active site" evidence="1">
    <location>
        <position position="350"/>
    </location>
</feature>
<feature type="binding site" evidence="1">
    <location>
        <position position="221"/>
    </location>
    <ligand>
        <name>substrate</name>
    </ligand>
</feature>
<feature type="binding site" evidence="1">
    <location>
        <position position="351"/>
    </location>
    <ligand>
        <name>substrate</name>
    </ligand>
</feature>
<feature type="site" description="Important for acyl-CoA specificity" evidence="1">
    <location>
        <position position="319"/>
    </location>
</feature>
<dbReference type="EC" id="2.3.1.46" evidence="1"/>
<dbReference type="EMBL" id="CP001013">
    <property type="protein sequence ID" value="ACB32596.1"/>
    <property type="molecule type" value="Genomic_DNA"/>
</dbReference>
<dbReference type="RefSeq" id="WP_012345358.1">
    <property type="nucleotide sequence ID" value="NC_010524.1"/>
</dbReference>
<dbReference type="SMR" id="B1XW69"/>
<dbReference type="STRING" id="395495.Lcho_0321"/>
<dbReference type="ESTHER" id="lepcp-metx">
    <property type="family name" value="Homoserine_transacetylase"/>
</dbReference>
<dbReference type="KEGG" id="lch:Lcho_0321"/>
<dbReference type="eggNOG" id="COG2021">
    <property type="taxonomic scope" value="Bacteria"/>
</dbReference>
<dbReference type="HOGENOM" id="CLU_028760_1_2_4"/>
<dbReference type="OrthoDB" id="9800754at2"/>
<dbReference type="UniPathway" id="UPA00051">
    <property type="reaction ID" value="UER00075"/>
</dbReference>
<dbReference type="Proteomes" id="UP000001693">
    <property type="component" value="Chromosome"/>
</dbReference>
<dbReference type="GO" id="GO:0005737">
    <property type="term" value="C:cytoplasm"/>
    <property type="evidence" value="ECO:0007669"/>
    <property type="project" value="UniProtKB-SubCell"/>
</dbReference>
<dbReference type="GO" id="GO:0004414">
    <property type="term" value="F:homoserine O-acetyltransferase activity"/>
    <property type="evidence" value="ECO:0007669"/>
    <property type="project" value="TreeGrafter"/>
</dbReference>
<dbReference type="GO" id="GO:0008899">
    <property type="term" value="F:homoserine O-succinyltransferase activity"/>
    <property type="evidence" value="ECO:0007669"/>
    <property type="project" value="UniProtKB-UniRule"/>
</dbReference>
<dbReference type="GO" id="GO:0009092">
    <property type="term" value="P:homoserine metabolic process"/>
    <property type="evidence" value="ECO:0007669"/>
    <property type="project" value="TreeGrafter"/>
</dbReference>
<dbReference type="GO" id="GO:0009086">
    <property type="term" value="P:methionine biosynthetic process"/>
    <property type="evidence" value="ECO:0007669"/>
    <property type="project" value="UniProtKB-UniRule"/>
</dbReference>
<dbReference type="FunFam" id="1.10.1740.110:FF:000001">
    <property type="entry name" value="Homoserine O-acetyltransferase"/>
    <property type="match status" value="1"/>
</dbReference>
<dbReference type="Gene3D" id="1.10.1740.110">
    <property type="match status" value="1"/>
</dbReference>
<dbReference type="Gene3D" id="3.40.50.1820">
    <property type="entry name" value="alpha/beta hydrolase"/>
    <property type="match status" value="1"/>
</dbReference>
<dbReference type="HAMAP" id="MF_00296">
    <property type="entry name" value="MetX_acyltransf"/>
    <property type="match status" value="1"/>
</dbReference>
<dbReference type="InterPro" id="IPR000073">
    <property type="entry name" value="AB_hydrolase_1"/>
</dbReference>
<dbReference type="InterPro" id="IPR029058">
    <property type="entry name" value="AB_hydrolase_fold"/>
</dbReference>
<dbReference type="InterPro" id="IPR008220">
    <property type="entry name" value="HAT_MetX-like"/>
</dbReference>
<dbReference type="NCBIfam" id="TIGR01392">
    <property type="entry name" value="homoserO_Ac_trn"/>
    <property type="match status" value="1"/>
</dbReference>
<dbReference type="NCBIfam" id="NF001209">
    <property type="entry name" value="PRK00175.1"/>
    <property type="match status" value="1"/>
</dbReference>
<dbReference type="PANTHER" id="PTHR32268">
    <property type="entry name" value="HOMOSERINE O-ACETYLTRANSFERASE"/>
    <property type="match status" value="1"/>
</dbReference>
<dbReference type="PANTHER" id="PTHR32268:SF11">
    <property type="entry name" value="HOMOSERINE O-ACETYLTRANSFERASE"/>
    <property type="match status" value="1"/>
</dbReference>
<dbReference type="Pfam" id="PF00561">
    <property type="entry name" value="Abhydrolase_1"/>
    <property type="match status" value="1"/>
</dbReference>
<dbReference type="PIRSF" id="PIRSF000443">
    <property type="entry name" value="Homoser_Ac_trans"/>
    <property type="match status" value="1"/>
</dbReference>
<dbReference type="SUPFAM" id="SSF53474">
    <property type="entry name" value="alpha/beta-Hydrolases"/>
    <property type="match status" value="1"/>
</dbReference>
<sequence>MVTLGHVTAQQMSFSDALPLRSGAALRDYTLVYETYGTLNADRSNAVLVCHALNASHHVAGTYADSDRSEGWWDNLIGPGKPLDTNRFFVIGVNNPGSCFGSTGPTHPNPATGRPYGADFPVVTVEDWVDAQARLLDGLGIERLAAVIGGSLGGMQALSWTLRHPARVGHALIIASAPNLSAQNIAFNEVARRAIITDPDFHAGHFYAHGVVPKRGLRVARMIGHITYLSDDSMEAKFGRALRSAELAYSTQEIEFQIESYLRYQGDKFSEYFDANTYLLITRALDYFDPAREFGGNLSAALAVARAKFLVVSFTTDWRFSPLRSREIVKALLDNRRDVSYAEIAAPHGHDAFLLDDPRYHGVLRAYFERVAQELPR</sequence>
<keyword id="KW-0012">Acyltransferase</keyword>
<keyword id="KW-0028">Amino-acid biosynthesis</keyword>
<keyword id="KW-0963">Cytoplasm</keyword>
<keyword id="KW-0486">Methionine biosynthesis</keyword>
<keyword id="KW-1185">Reference proteome</keyword>
<keyword id="KW-0808">Transferase</keyword>
<evidence type="ECO:0000255" key="1">
    <source>
        <dbReference type="HAMAP-Rule" id="MF_00296"/>
    </source>
</evidence>
<accession>B1XW69</accession>
<name>METXS_LEPCP</name>
<proteinExistence type="inferred from homology"/>
<organism>
    <name type="scientific">Leptothrix cholodnii (strain ATCC 51168 / LMG 8142 / SP-6)</name>
    <name type="common">Leptothrix discophora (strain SP-6)</name>
    <dbReference type="NCBI Taxonomy" id="395495"/>
    <lineage>
        <taxon>Bacteria</taxon>
        <taxon>Pseudomonadati</taxon>
        <taxon>Pseudomonadota</taxon>
        <taxon>Betaproteobacteria</taxon>
        <taxon>Burkholderiales</taxon>
        <taxon>Sphaerotilaceae</taxon>
        <taxon>Leptothrix</taxon>
    </lineage>
</organism>
<reference key="1">
    <citation type="submission" date="2008-03" db="EMBL/GenBank/DDBJ databases">
        <title>Complete sequence of Leptothrix cholodnii SP-6.</title>
        <authorList>
            <consortium name="US DOE Joint Genome Institute"/>
            <person name="Copeland A."/>
            <person name="Lucas S."/>
            <person name="Lapidus A."/>
            <person name="Glavina del Rio T."/>
            <person name="Dalin E."/>
            <person name="Tice H."/>
            <person name="Bruce D."/>
            <person name="Goodwin L."/>
            <person name="Pitluck S."/>
            <person name="Chertkov O."/>
            <person name="Brettin T."/>
            <person name="Detter J.C."/>
            <person name="Han C."/>
            <person name="Kuske C.R."/>
            <person name="Schmutz J."/>
            <person name="Larimer F."/>
            <person name="Land M."/>
            <person name="Hauser L."/>
            <person name="Kyrpides N."/>
            <person name="Lykidis A."/>
            <person name="Emerson D."/>
            <person name="Richardson P."/>
        </authorList>
    </citation>
    <scope>NUCLEOTIDE SEQUENCE [LARGE SCALE GENOMIC DNA]</scope>
    <source>
        <strain>ATCC 51168 / LMG 8142 / SP-6</strain>
    </source>
</reference>
<protein>
    <recommendedName>
        <fullName evidence="1">Homoserine O-succinyltransferase</fullName>
        <shortName evidence="1">HST</shortName>
        <ecNumber evidence="1">2.3.1.46</ecNumber>
    </recommendedName>
    <alternativeName>
        <fullName evidence="1">Homoserine transsuccinylase</fullName>
        <shortName evidence="1">HTS</shortName>
    </alternativeName>
</protein>